<evidence type="ECO:0000255" key="1">
    <source>
        <dbReference type="HAMAP-Rule" id="MF_00294"/>
    </source>
</evidence>
<evidence type="ECO:0000305" key="2"/>
<name>RL33_FRATM</name>
<protein>
    <recommendedName>
        <fullName evidence="1">Large ribosomal subunit protein bL33</fullName>
    </recommendedName>
    <alternativeName>
        <fullName evidence="2">50S ribosomal protein L33</fullName>
    </alternativeName>
</protein>
<accession>B2SFL4</accession>
<comment type="similarity">
    <text evidence="1">Belongs to the bacterial ribosomal protein bL33 family.</text>
</comment>
<organism>
    <name type="scientific">Francisella tularensis subsp. mediasiatica (strain FSC147)</name>
    <dbReference type="NCBI Taxonomy" id="441952"/>
    <lineage>
        <taxon>Bacteria</taxon>
        <taxon>Pseudomonadati</taxon>
        <taxon>Pseudomonadota</taxon>
        <taxon>Gammaproteobacteria</taxon>
        <taxon>Thiotrichales</taxon>
        <taxon>Francisellaceae</taxon>
        <taxon>Francisella</taxon>
    </lineage>
</organism>
<sequence length="51" mass="6141">MREKIRLVSSAKTGHFYTTTKNKKEMPNKMEIKKYDPVVRKHVMYKEAKIK</sequence>
<gene>
    <name evidence="1" type="primary">rpmG</name>
    <name type="ordered locus">FTM_0306</name>
</gene>
<feature type="chain" id="PRO_0000356465" description="Large ribosomal subunit protein bL33">
    <location>
        <begin position="1"/>
        <end position="51"/>
    </location>
</feature>
<keyword id="KW-0687">Ribonucleoprotein</keyword>
<keyword id="KW-0689">Ribosomal protein</keyword>
<dbReference type="EMBL" id="CP000915">
    <property type="protein sequence ID" value="ACD30363.1"/>
    <property type="molecule type" value="Genomic_DNA"/>
</dbReference>
<dbReference type="SMR" id="B2SFL4"/>
<dbReference type="KEGG" id="ftm:FTM_0306"/>
<dbReference type="HOGENOM" id="CLU_190949_1_1_6"/>
<dbReference type="GO" id="GO:0022625">
    <property type="term" value="C:cytosolic large ribosomal subunit"/>
    <property type="evidence" value="ECO:0007669"/>
    <property type="project" value="TreeGrafter"/>
</dbReference>
<dbReference type="GO" id="GO:0003735">
    <property type="term" value="F:structural constituent of ribosome"/>
    <property type="evidence" value="ECO:0007669"/>
    <property type="project" value="InterPro"/>
</dbReference>
<dbReference type="GO" id="GO:0006412">
    <property type="term" value="P:translation"/>
    <property type="evidence" value="ECO:0007669"/>
    <property type="project" value="UniProtKB-UniRule"/>
</dbReference>
<dbReference type="FunFam" id="2.20.28.120:FF:000001">
    <property type="entry name" value="50S ribosomal protein L33"/>
    <property type="match status" value="1"/>
</dbReference>
<dbReference type="Gene3D" id="2.20.28.120">
    <property type="entry name" value="Ribosomal protein L33"/>
    <property type="match status" value="1"/>
</dbReference>
<dbReference type="HAMAP" id="MF_00294">
    <property type="entry name" value="Ribosomal_bL33"/>
    <property type="match status" value="1"/>
</dbReference>
<dbReference type="InterPro" id="IPR001705">
    <property type="entry name" value="Ribosomal_bL33"/>
</dbReference>
<dbReference type="InterPro" id="IPR018264">
    <property type="entry name" value="Ribosomal_bL33_CS"/>
</dbReference>
<dbReference type="InterPro" id="IPR038584">
    <property type="entry name" value="Ribosomal_bL33_sf"/>
</dbReference>
<dbReference type="InterPro" id="IPR011332">
    <property type="entry name" value="Ribosomal_zn-bd"/>
</dbReference>
<dbReference type="NCBIfam" id="NF001860">
    <property type="entry name" value="PRK00595.1"/>
    <property type="match status" value="1"/>
</dbReference>
<dbReference type="NCBIfam" id="TIGR01023">
    <property type="entry name" value="rpmG_bact"/>
    <property type="match status" value="1"/>
</dbReference>
<dbReference type="PANTHER" id="PTHR15238">
    <property type="entry name" value="54S RIBOSOMAL PROTEIN L39, MITOCHONDRIAL"/>
    <property type="match status" value="1"/>
</dbReference>
<dbReference type="PANTHER" id="PTHR15238:SF1">
    <property type="entry name" value="LARGE RIBOSOMAL SUBUNIT PROTEIN BL33M"/>
    <property type="match status" value="1"/>
</dbReference>
<dbReference type="Pfam" id="PF00471">
    <property type="entry name" value="Ribosomal_L33"/>
    <property type="match status" value="1"/>
</dbReference>
<dbReference type="SUPFAM" id="SSF57829">
    <property type="entry name" value="Zn-binding ribosomal proteins"/>
    <property type="match status" value="1"/>
</dbReference>
<dbReference type="PROSITE" id="PS00582">
    <property type="entry name" value="RIBOSOMAL_L33"/>
    <property type="match status" value="1"/>
</dbReference>
<proteinExistence type="inferred from homology"/>
<reference key="1">
    <citation type="journal article" date="2009" name="PLoS Pathog.">
        <title>Molecular evolutionary consequences of niche restriction in Francisella tularensis, a facultative intracellular pathogen.</title>
        <authorList>
            <person name="Larsson P."/>
            <person name="Elfsmark D."/>
            <person name="Svensson K."/>
            <person name="Wikstroem P."/>
            <person name="Forsman M."/>
            <person name="Brettin T."/>
            <person name="Keim P."/>
            <person name="Johansson A."/>
        </authorList>
    </citation>
    <scope>NUCLEOTIDE SEQUENCE [LARGE SCALE GENOMIC DNA]</scope>
    <source>
        <strain>FSC147</strain>
    </source>
</reference>